<reference key="1">
    <citation type="journal article" date="2005" name="Science">
        <title>The transcriptional landscape of the mammalian genome.</title>
        <authorList>
            <person name="Carninci P."/>
            <person name="Kasukawa T."/>
            <person name="Katayama S."/>
            <person name="Gough J."/>
            <person name="Frith M.C."/>
            <person name="Maeda N."/>
            <person name="Oyama R."/>
            <person name="Ravasi T."/>
            <person name="Lenhard B."/>
            <person name="Wells C."/>
            <person name="Kodzius R."/>
            <person name="Shimokawa K."/>
            <person name="Bajic V.B."/>
            <person name="Brenner S.E."/>
            <person name="Batalov S."/>
            <person name="Forrest A.R."/>
            <person name="Zavolan M."/>
            <person name="Davis M.J."/>
            <person name="Wilming L.G."/>
            <person name="Aidinis V."/>
            <person name="Allen J.E."/>
            <person name="Ambesi-Impiombato A."/>
            <person name="Apweiler R."/>
            <person name="Aturaliya R.N."/>
            <person name="Bailey T.L."/>
            <person name="Bansal M."/>
            <person name="Baxter L."/>
            <person name="Beisel K.W."/>
            <person name="Bersano T."/>
            <person name="Bono H."/>
            <person name="Chalk A.M."/>
            <person name="Chiu K.P."/>
            <person name="Choudhary V."/>
            <person name="Christoffels A."/>
            <person name="Clutterbuck D.R."/>
            <person name="Crowe M.L."/>
            <person name="Dalla E."/>
            <person name="Dalrymple B.P."/>
            <person name="de Bono B."/>
            <person name="Della Gatta G."/>
            <person name="di Bernardo D."/>
            <person name="Down T."/>
            <person name="Engstrom P."/>
            <person name="Fagiolini M."/>
            <person name="Faulkner G."/>
            <person name="Fletcher C.F."/>
            <person name="Fukushima T."/>
            <person name="Furuno M."/>
            <person name="Futaki S."/>
            <person name="Gariboldi M."/>
            <person name="Georgii-Hemming P."/>
            <person name="Gingeras T.R."/>
            <person name="Gojobori T."/>
            <person name="Green R.E."/>
            <person name="Gustincich S."/>
            <person name="Harbers M."/>
            <person name="Hayashi Y."/>
            <person name="Hensch T.K."/>
            <person name="Hirokawa N."/>
            <person name="Hill D."/>
            <person name="Huminiecki L."/>
            <person name="Iacono M."/>
            <person name="Ikeo K."/>
            <person name="Iwama A."/>
            <person name="Ishikawa T."/>
            <person name="Jakt M."/>
            <person name="Kanapin A."/>
            <person name="Katoh M."/>
            <person name="Kawasawa Y."/>
            <person name="Kelso J."/>
            <person name="Kitamura H."/>
            <person name="Kitano H."/>
            <person name="Kollias G."/>
            <person name="Krishnan S.P."/>
            <person name="Kruger A."/>
            <person name="Kummerfeld S.K."/>
            <person name="Kurochkin I.V."/>
            <person name="Lareau L.F."/>
            <person name="Lazarevic D."/>
            <person name="Lipovich L."/>
            <person name="Liu J."/>
            <person name="Liuni S."/>
            <person name="McWilliam S."/>
            <person name="Madan Babu M."/>
            <person name="Madera M."/>
            <person name="Marchionni L."/>
            <person name="Matsuda H."/>
            <person name="Matsuzawa S."/>
            <person name="Miki H."/>
            <person name="Mignone F."/>
            <person name="Miyake S."/>
            <person name="Morris K."/>
            <person name="Mottagui-Tabar S."/>
            <person name="Mulder N."/>
            <person name="Nakano N."/>
            <person name="Nakauchi H."/>
            <person name="Ng P."/>
            <person name="Nilsson R."/>
            <person name="Nishiguchi S."/>
            <person name="Nishikawa S."/>
            <person name="Nori F."/>
            <person name="Ohara O."/>
            <person name="Okazaki Y."/>
            <person name="Orlando V."/>
            <person name="Pang K.C."/>
            <person name="Pavan W.J."/>
            <person name="Pavesi G."/>
            <person name="Pesole G."/>
            <person name="Petrovsky N."/>
            <person name="Piazza S."/>
            <person name="Reed J."/>
            <person name="Reid J.F."/>
            <person name="Ring B.Z."/>
            <person name="Ringwald M."/>
            <person name="Rost B."/>
            <person name="Ruan Y."/>
            <person name="Salzberg S.L."/>
            <person name="Sandelin A."/>
            <person name="Schneider C."/>
            <person name="Schoenbach C."/>
            <person name="Sekiguchi K."/>
            <person name="Semple C.A."/>
            <person name="Seno S."/>
            <person name="Sessa L."/>
            <person name="Sheng Y."/>
            <person name="Shibata Y."/>
            <person name="Shimada H."/>
            <person name="Shimada K."/>
            <person name="Silva D."/>
            <person name="Sinclair B."/>
            <person name="Sperling S."/>
            <person name="Stupka E."/>
            <person name="Sugiura K."/>
            <person name="Sultana R."/>
            <person name="Takenaka Y."/>
            <person name="Taki K."/>
            <person name="Tammoja K."/>
            <person name="Tan S.L."/>
            <person name="Tang S."/>
            <person name="Taylor M.S."/>
            <person name="Tegner J."/>
            <person name="Teichmann S.A."/>
            <person name="Ueda H.R."/>
            <person name="van Nimwegen E."/>
            <person name="Verardo R."/>
            <person name="Wei C.L."/>
            <person name="Yagi K."/>
            <person name="Yamanishi H."/>
            <person name="Zabarovsky E."/>
            <person name="Zhu S."/>
            <person name="Zimmer A."/>
            <person name="Hide W."/>
            <person name="Bult C."/>
            <person name="Grimmond S.M."/>
            <person name="Teasdale R.D."/>
            <person name="Liu E.T."/>
            <person name="Brusic V."/>
            <person name="Quackenbush J."/>
            <person name="Wahlestedt C."/>
            <person name="Mattick J.S."/>
            <person name="Hume D.A."/>
            <person name="Kai C."/>
            <person name="Sasaki D."/>
            <person name="Tomaru Y."/>
            <person name="Fukuda S."/>
            <person name="Kanamori-Katayama M."/>
            <person name="Suzuki M."/>
            <person name="Aoki J."/>
            <person name="Arakawa T."/>
            <person name="Iida J."/>
            <person name="Imamura K."/>
            <person name="Itoh M."/>
            <person name="Kato T."/>
            <person name="Kawaji H."/>
            <person name="Kawagashira N."/>
            <person name="Kawashima T."/>
            <person name="Kojima M."/>
            <person name="Kondo S."/>
            <person name="Konno H."/>
            <person name="Nakano K."/>
            <person name="Ninomiya N."/>
            <person name="Nishio T."/>
            <person name="Okada M."/>
            <person name="Plessy C."/>
            <person name="Shibata K."/>
            <person name="Shiraki T."/>
            <person name="Suzuki S."/>
            <person name="Tagami M."/>
            <person name="Waki K."/>
            <person name="Watahiki A."/>
            <person name="Okamura-Oho Y."/>
            <person name="Suzuki H."/>
            <person name="Kawai J."/>
            <person name="Hayashizaki Y."/>
        </authorList>
    </citation>
    <scope>NUCLEOTIDE SEQUENCE [LARGE SCALE MRNA] (ISOFORM 2)</scope>
    <scope>NUCLEOTIDE SEQUENCE [LARGE SCALE MRNA] OF 576-1231 (ISOFORM 1)</scope>
    <source>
        <strain>C57BL/6J</strain>
        <tissue>Bone marrow</tissue>
        <tissue>Head</tissue>
        <tissue>Olfactory bulb</tissue>
    </source>
</reference>
<reference key="2">
    <citation type="journal article" date="2009" name="PLoS Biol.">
        <title>Lineage-specific biology revealed by a finished genome assembly of the mouse.</title>
        <authorList>
            <person name="Church D.M."/>
            <person name="Goodstadt L."/>
            <person name="Hillier L.W."/>
            <person name="Zody M.C."/>
            <person name="Goldstein S."/>
            <person name="She X."/>
            <person name="Bult C.J."/>
            <person name="Agarwala R."/>
            <person name="Cherry J.L."/>
            <person name="DiCuccio M."/>
            <person name="Hlavina W."/>
            <person name="Kapustin Y."/>
            <person name="Meric P."/>
            <person name="Maglott D."/>
            <person name="Birtle Z."/>
            <person name="Marques A.C."/>
            <person name="Graves T."/>
            <person name="Zhou S."/>
            <person name="Teague B."/>
            <person name="Potamousis K."/>
            <person name="Churas C."/>
            <person name="Place M."/>
            <person name="Herschleb J."/>
            <person name="Runnheim R."/>
            <person name="Forrest D."/>
            <person name="Amos-Landgraf J."/>
            <person name="Schwartz D.C."/>
            <person name="Cheng Z."/>
            <person name="Lindblad-Toh K."/>
            <person name="Eichler E.E."/>
            <person name="Ponting C.P."/>
        </authorList>
    </citation>
    <scope>NUCLEOTIDE SEQUENCE [LARGE SCALE GENOMIC DNA]</scope>
    <source>
        <strain>C57BL/6J</strain>
    </source>
</reference>
<reference key="3">
    <citation type="journal article" date="2009" name="Immunity">
        <title>The phagosomal proteome in interferon-gamma-activated macrophages.</title>
        <authorList>
            <person name="Trost M."/>
            <person name="English L."/>
            <person name="Lemieux S."/>
            <person name="Courcelles M."/>
            <person name="Desjardins M."/>
            <person name="Thibault P."/>
        </authorList>
    </citation>
    <scope>PHOSPHORYLATION [LARGE SCALE ANALYSIS] AT SER-243; SER-816; SER-1002 AND SER-1032</scope>
    <scope>IDENTIFICATION BY MASS SPECTROMETRY [LARGE SCALE ANALYSIS]</scope>
</reference>
<reference key="4">
    <citation type="journal article" date="2010" name="Cell">
        <title>A tissue-specific atlas of mouse protein phosphorylation and expression.</title>
        <authorList>
            <person name="Huttlin E.L."/>
            <person name="Jedrychowski M.P."/>
            <person name="Elias J.E."/>
            <person name="Goswami T."/>
            <person name="Rad R."/>
            <person name="Beausoleil S.A."/>
            <person name="Villen J."/>
            <person name="Haas W."/>
            <person name="Sowa M.E."/>
            <person name="Gygi S.P."/>
        </authorList>
    </citation>
    <scope>PHOSPHORYLATION [LARGE SCALE ANALYSIS] AT SER-41; SER-243; SER-792; SER-816 AND SER-1002</scope>
    <scope>IDENTIFICATION BY MASS SPECTROMETRY [LARGE SCALE ANALYSIS]</scope>
    <source>
        <tissue>Brain</tissue>
        <tissue>Brown adipose tissue</tissue>
        <tissue>Kidney</tissue>
        <tissue>Liver</tissue>
        <tissue>Lung</tissue>
        <tissue>Pancreas</tissue>
        <tissue>Spleen</tissue>
        <tissue>Testis</tissue>
    </source>
</reference>
<reference key="5">
    <citation type="journal article" date="2014" name="Mol. Cell. Proteomics">
        <title>Immunoaffinity enrichment and mass spectrometry analysis of protein methylation.</title>
        <authorList>
            <person name="Guo A."/>
            <person name="Gu H."/>
            <person name="Zhou J."/>
            <person name="Mulhern D."/>
            <person name="Wang Y."/>
            <person name="Lee K.A."/>
            <person name="Yang V."/>
            <person name="Aguiar M."/>
            <person name="Kornhauser J."/>
            <person name="Jia X."/>
            <person name="Ren J."/>
            <person name="Beausoleil S.A."/>
            <person name="Silva J.C."/>
            <person name="Vemulapalli V."/>
            <person name="Bedford M.T."/>
            <person name="Comb M.J."/>
        </authorList>
    </citation>
    <scope>METHYLATION [LARGE SCALE ANALYSIS] AT ARG-520</scope>
    <scope>IDENTIFICATION BY MASS SPECTROMETRY [LARGE SCALE ANALYSIS]</scope>
    <source>
        <tissue>Brain</tissue>
        <tissue>Embryo</tissue>
    </source>
</reference>
<name>RBM33_MOUSE</name>
<dbReference type="EMBL" id="AK014289">
    <property type="protein sequence ID" value="BAB29246.1"/>
    <property type="molecule type" value="mRNA"/>
</dbReference>
<dbReference type="EMBL" id="AK078210">
    <property type="protein sequence ID" value="BAC37175.1"/>
    <property type="molecule type" value="mRNA"/>
</dbReference>
<dbReference type="EMBL" id="AK153360">
    <property type="protein sequence ID" value="BAE31932.1"/>
    <property type="molecule type" value="mRNA"/>
</dbReference>
<dbReference type="EMBL" id="AC134530">
    <property type="status" value="NOT_ANNOTATED_CDS"/>
    <property type="molecule type" value="Genomic_DNA"/>
</dbReference>
<dbReference type="CCDS" id="CCDS51448.1">
    <molecule id="Q9CXK9-1"/>
</dbReference>
<dbReference type="RefSeq" id="NP_082510.1">
    <molecule id="Q9CXK9-1"/>
    <property type="nucleotide sequence ID" value="NM_028234.1"/>
</dbReference>
<dbReference type="SMR" id="Q9CXK9"/>
<dbReference type="BioGRID" id="238016">
    <property type="interactions" value="3"/>
</dbReference>
<dbReference type="FunCoup" id="Q9CXK9">
    <property type="interactions" value="434"/>
</dbReference>
<dbReference type="IntAct" id="Q9CXK9">
    <property type="interactions" value="1"/>
</dbReference>
<dbReference type="STRING" id="10090.ENSMUSP00000062449"/>
<dbReference type="GlyGen" id="Q9CXK9">
    <property type="glycosylation" value="4 sites, 1 O-linked glycan (4 sites)"/>
</dbReference>
<dbReference type="iPTMnet" id="Q9CXK9"/>
<dbReference type="PhosphoSitePlus" id="Q9CXK9"/>
<dbReference type="jPOST" id="Q9CXK9"/>
<dbReference type="PaxDb" id="10090-ENSMUSP00000062449"/>
<dbReference type="PeptideAtlas" id="Q9CXK9"/>
<dbReference type="ProteomicsDB" id="255037">
    <molecule id="Q9CXK9-1"/>
</dbReference>
<dbReference type="ProteomicsDB" id="255038">
    <molecule id="Q9CXK9-2"/>
</dbReference>
<dbReference type="Pumba" id="Q9CXK9"/>
<dbReference type="Antibodypedia" id="18863">
    <property type="antibodies" value="46 antibodies from 10 providers"/>
</dbReference>
<dbReference type="Ensembl" id="ENSMUST00000030920.6">
    <molecule id="Q9CXK9-2"/>
    <property type="protein sequence ID" value="ENSMUSP00000030920.5"/>
    <property type="gene ID" value="ENSMUSG00000048271.15"/>
</dbReference>
<dbReference type="Ensembl" id="ENSMUST00000059644.13">
    <molecule id="Q9CXK9-1"/>
    <property type="protein sequence ID" value="ENSMUSP00000062449.7"/>
    <property type="gene ID" value="ENSMUSG00000048271.15"/>
</dbReference>
<dbReference type="GeneID" id="381626"/>
<dbReference type="KEGG" id="mmu:381626"/>
<dbReference type="UCSC" id="uc008wty.1">
    <molecule id="Q9CXK9-2"/>
    <property type="organism name" value="mouse"/>
</dbReference>
<dbReference type="UCSC" id="uc008wtz.1">
    <molecule id="Q9CXK9-1"/>
    <property type="organism name" value="mouse"/>
</dbReference>
<dbReference type="AGR" id="MGI:1919670"/>
<dbReference type="CTD" id="155435"/>
<dbReference type="MGI" id="MGI:1919670">
    <property type="gene designation" value="Rbm33"/>
</dbReference>
<dbReference type="VEuPathDB" id="HostDB:ENSMUSG00000048271"/>
<dbReference type="eggNOG" id="ENOG502QR1Z">
    <property type="taxonomic scope" value="Eukaryota"/>
</dbReference>
<dbReference type="GeneTree" id="ENSGT00530000063891"/>
<dbReference type="InParanoid" id="Q9CXK9"/>
<dbReference type="OMA" id="EQHNSPA"/>
<dbReference type="OrthoDB" id="5990677at2759"/>
<dbReference type="PhylomeDB" id="Q9CXK9"/>
<dbReference type="TreeFam" id="TF332363"/>
<dbReference type="BioGRID-ORCS" id="381626">
    <property type="hits" value="20 hits in 77 CRISPR screens"/>
</dbReference>
<dbReference type="ChiTaRS" id="Rbm33">
    <property type="organism name" value="mouse"/>
</dbReference>
<dbReference type="PRO" id="PR:Q9CXK9"/>
<dbReference type="Proteomes" id="UP000000589">
    <property type="component" value="Chromosome 5"/>
</dbReference>
<dbReference type="RNAct" id="Q9CXK9">
    <property type="molecule type" value="protein"/>
</dbReference>
<dbReference type="Bgee" id="ENSMUSG00000048271">
    <property type="expression patterns" value="Expressed in manus and 228 other cell types or tissues"/>
</dbReference>
<dbReference type="ExpressionAtlas" id="Q9CXK9">
    <property type="expression patterns" value="baseline and differential"/>
</dbReference>
<dbReference type="GO" id="GO:0005737">
    <property type="term" value="C:cytoplasm"/>
    <property type="evidence" value="ECO:0000250"/>
    <property type="project" value="UniProtKB"/>
</dbReference>
<dbReference type="GO" id="GO:0005634">
    <property type="term" value="C:nucleus"/>
    <property type="evidence" value="ECO:0000250"/>
    <property type="project" value="UniProtKB"/>
</dbReference>
<dbReference type="GO" id="GO:0106222">
    <property type="term" value="F:lncRNA binding"/>
    <property type="evidence" value="ECO:0000250"/>
    <property type="project" value="UniProtKB"/>
</dbReference>
<dbReference type="GO" id="GO:1990247">
    <property type="term" value="F:N6-methyladenosine-containing RNA reader activity"/>
    <property type="evidence" value="ECO:0000250"/>
    <property type="project" value="UniProtKB"/>
</dbReference>
<dbReference type="GO" id="GO:0030674">
    <property type="term" value="F:protein-macromolecule adaptor activity"/>
    <property type="evidence" value="ECO:0000250"/>
    <property type="project" value="UniProtKB"/>
</dbReference>
<dbReference type="GO" id="GO:0003723">
    <property type="term" value="F:RNA binding"/>
    <property type="evidence" value="ECO:0000250"/>
    <property type="project" value="UniProtKB"/>
</dbReference>
<dbReference type="GO" id="GO:0051028">
    <property type="term" value="P:mRNA transport"/>
    <property type="evidence" value="ECO:0007669"/>
    <property type="project" value="UniProtKB-KW"/>
</dbReference>
<dbReference type="GO" id="GO:0043488">
    <property type="term" value="P:regulation of mRNA stability"/>
    <property type="evidence" value="ECO:0007669"/>
    <property type="project" value="Ensembl"/>
</dbReference>
<dbReference type="GO" id="GO:0006405">
    <property type="term" value="P:RNA export from nucleus"/>
    <property type="evidence" value="ECO:0000250"/>
    <property type="project" value="UniProtKB"/>
</dbReference>
<dbReference type="FunFam" id="3.30.70.330:FF:000245">
    <property type="entry name" value="RNA-binding protein 33 isoform X4"/>
    <property type="match status" value="1"/>
</dbReference>
<dbReference type="Gene3D" id="3.30.70.330">
    <property type="match status" value="1"/>
</dbReference>
<dbReference type="InterPro" id="IPR012677">
    <property type="entry name" value="Nucleotide-bd_a/b_plait_sf"/>
</dbReference>
<dbReference type="InterPro" id="IPR035979">
    <property type="entry name" value="RBD_domain_sf"/>
</dbReference>
<dbReference type="InterPro" id="IPR039878">
    <property type="entry name" value="RBM33"/>
</dbReference>
<dbReference type="InterPro" id="IPR000504">
    <property type="entry name" value="RRM_dom"/>
</dbReference>
<dbReference type="PANTHER" id="PTHR22014">
    <property type="entry name" value="RNA-BINDING PROTEIN 33"/>
    <property type="match status" value="1"/>
</dbReference>
<dbReference type="PANTHER" id="PTHR22014:SF2">
    <property type="entry name" value="RNA-BINDING PROTEIN 33"/>
    <property type="match status" value="1"/>
</dbReference>
<dbReference type="SMART" id="SM00360">
    <property type="entry name" value="RRM"/>
    <property type="match status" value="1"/>
</dbReference>
<dbReference type="SUPFAM" id="SSF54928">
    <property type="entry name" value="RNA-binding domain, RBD"/>
    <property type="match status" value="1"/>
</dbReference>
<proteinExistence type="evidence at protein level"/>
<sequence length="1231" mass="137325">MAAALGAGGGAGAGDDDFDQFDKPGAERSWRRRAADEDWDSELEDDLLGEDLLSGKKNQSDLSDEELNDDLLQSDNEEEENFSSQGVTISLNTTSGIVTSFELSDNTNDQSGEQESEYEQGDDELAYHKPEEQELYTQEYPEEGQYEGHDAELTEDQIEYGDEPEEEQLYSDEVLDIEINEPLDEFTDEEYLQAYGGQQGLQVREDCEAEDDLDEITDSQVASETHEGGMETLELQKDIKEESDEEDDDDEESGRLRFKTERKEGTIIRLSDVTRERRNIPETLELSAEAKAALLEFEERERQHKQGRYGSRRGGRRGGSLMCRGMGDQRRDNSERGRMKEHRPALLPTQPSVVAHSPRLIPPPQPQPPPPPPPPPPQQQPIRSLFQQQQLQPLLPLQHPHHPSPPQGVHMPPQIETPRMMLTPPPVTPQQPKNIHINPHFKGTVVTPVQVPLLPVPSQPRPAVGPQRFPGPPEFPQHTPGPVPNSFNQPPRLPLQDQWRAPPPPQERDPFFLGVSGEPRFPSHLFLEQRSPPPPPPPPTLLNSSHPVPTQSPLPFTQPGPAFNQQGQQPVFPRERPVRPALQPPGPVGILHFSQPGSATARPFIPPRQPFLPSPGQPFLPTHAQPNLQGPLHPPLPPPHQPQPQPQQPQQQPQHHQHQPPLQPPLQPPHQPPPQHQPPPQHQPQQHQHHHHLSAPPPPLMPMSQPQFRPHVQTAQPQPSSSRMQCTPHQGLRHNAASQNISKRPMQQMQPTAPRNSNLRELPIAPSHVLEMSGNRCSSTPVAQVKSIVNTSPPCRAVVSSRSSQGNTDAKAKPLSPEAQPKEEAKPEAEFPDEDEETRLYRLKIEEQKRLREEILKQKELRRQQQAGARKKELLERLAQQQQQQQQQQHQPQQQQQQPQQIYGSQTSMEQEELAATPSPTNGNPLLPFPGAQCRQNVKTRLLVKNQDITTASVQPKAVNFVPPGANVQHQGQHLRPLKHLRQLPHKVLQVKPMDMEETPHSPQAARVTSLQGRPQDTKPGVKRTVMHRANSGGGGDGPHVSSKVRVIKLSGGQGGESDGFSHTEGQPQRLPQPPDMRQQPTRKVTLTKGVPQQPQHLPVGPHMYPAIPPGIKSIQGIHPAKKAIMHGRGRGVAGPMGRGRLMPNKQNLRVVECKPQPCVVSVEGLSSSTTDVQLKSLLMSVGPIQSLQMLPQQRKAIAKFKEPAHALAFQQKFHRHMIDLSHINVALIVE</sequence>
<gene>
    <name evidence="6" type="primary">Rbm33</name>
    <name type="synonym">Prr8</name>
</gene>
<evidence type="ECO:0000250" key="1">
    <source>
        <dbReference type="UniProtKB" id="Q96EV2"/>
    </source>
</evidence>
<evidence type="ECO:0000255" key="2"/>
<evidence type="ECO:0000256" key="3">
    <source>
        <dbReference type="SAM" id="MobiDB-lite"/>
    </source>
</evidence>
<evidence type="ECO:0000303" key="4">
    <source>
    </source>
</evidence>
<evidence type="ECO:0000305" key="5"/>
<evidence type="ECO:0000312" key="6">
    <source>
        <dbReference type="MGI" id="MGI:1919670"/>
    </source>
</evidence>
<evidence type="ECO:0007744" key="7">
    <source>
    </source>
</evidence>
<evidence type="ECO:0007744" key="8">
    <source>
    </source>
</evidence>
<evidence type="ECO:0007744" key="9">
    <source>
    </source>
</evidence>
<accession>Q9CXK9</accession>
<accession>Q3U5Z3</accession>
<accession>Q8C5J6</accession>
<feature type="initiator methionine" description="Removed" evidence="1">
    <location>
        <position position="1"/>
    </location>
</feature>
<feature type="chain" id="PRO_0000285045" description="RNA-binding protein 33">
    <location>
        <begin position="2"/>
        <end position="1231"/>
    </location>
</feature>
<feature type="region of interest" description="Disordered" evidence="3">
    <location>
        <begin position="1"/>
        <end position="168"/>
    </location>
</feature>
<feature type="region of interest" description="Disordered" evidence="3">
    <location>
        <begin position="219"/>
        <end position="261"/>
    </location>
</feature>
<feature type="region of interest" description="Disordered" evidence="3">
    <location>
        <begin position="297"/>
        <end position="436"/>
    </location>
</feature>
<feature type="region of interest" description="Disordered" evidence="3">
    <location>
        <begin position="452"/>
        <end position="761"/>
    </location>
</feature>
<feature type="region of interest" description="Disordered" evidence="3">
    <location>
        <begin position="796"/>
        <end position="840"/>
    </location>
</feature>
<feature type="region of interest" description="Disordered" evidence="3">
    <location>
        <begin position="876"/>
        <end position="932"/>
    </location>
</feature>
<feature type="region of interest" description="Disordered" evidence="3">
    <location>
        <begin position="998"/>
        <end position="1080"/>
    </location>
</feature>
<feature type="coiled-coil region" evidence="2">
    <location>
        <begin position="840"/>
        <end position="891"/>
    </location>
</feature>
<feature type="compositionally biased region" description="Gly residues" evidence="3">
    <location>
        <begin position="1"/>
        <end position="13"/>
    </location>
</feature>
<feature type="compositionally biased region" description="Basic and acidic residues" evidence="3">
    <location>
        <begin position="20"/>
        <end position="36"/>
    </location>
</feature>
<feature type="compositionally biased region" description="Acidic residues" evidence="3">
    <location>
        <begin position="37"/>
        <end position="49"/>
    </location>
</feature>
<feature type="compositionally biased region" description="Polar residues" evidence="3">
    <location>
        <begin position="82"/>
        <end position="108"/>
    </location>
</feature>
<feature type="compositionally biased region" description="Acidic residues" evidence="3">
    <location>
        <begin position="112"/>
        <end position="124"/>
    </location>
</feature>
<feature type="compositionally biased region" description="Acidic residues" evidence="3">
    <location>
        <begin position="153"/>
        <end position="168"/>
    </location>
</feature>
<feature type="compositionally biased region" description="Basic and acidic residues" evidence="3">
    <location>
        <begin position="224"/>
        <end position="240"/>
    </location>
</feature>
<feature type="compositionally biased region" description="Acidic residues" evidence="3">
    <location>
        <begin position="241"/>
        <end position="252"/>
    </location>
</feature>
<feature type="compositionally biased region" description="Basic residues" evidence="3">
    <location>
        <begin position="305"/>
        <end position="316"/>
    </location>
</feature>
<feature type="compositionally biased region" description="Basic and acidic residues" evidence="3">
    <location>
        <begin position="327"/>
        <end position="344"/>
    </location>
</feature>
<feature type="compositionally biased region" description="Pro residues" evidence="3">
    <location>
        <begin position="360"/>
        <end position="379"/>
    </location>
</feature>
<feature type="compositionally biased region" description="Low complexity" evidence="3">
    <location>
        <begin position="380"/>
        <end position="398"/>
    </location>
</feature>
<feature type="compositionally biased region" description="Pro residues" evidence="3">
    <location>
        <begin position="469"/>
        <end position="483"/>
    </location>
</feature>
<feature type="compositionally biased region" description="Pro residues" evidence="3">
    <location>
        <begin position="531"/>
        <end position="540"/>
    </location>
</feature>
<feature type="compositionally biased region" description="Pro residues" evidence="3">
    <location>
        <begin position="604"/>
        <end position="618"/>
    </location>
</feature>
<feature type="compositionally biased region" description="Pro residues" evidence="3">
    <location>
        <begin position="632"/>
        <end position="647"/>
    </location>
</feature>
<feature type="compositionally biased region" description="Pro residues" evidence="3">
    <location>
        <begin position="661"/>
        <end position="682"/>
    </location>
</feature>
<feature type="compositionally biased region" description="Polar residues" evidence="3">
    <location>
        <begin position="713"/>
        <end position="728"/>
    </location>
</feature>
<feature type="compositionally biased region" description="Polar residues" evidence="3">
    <location>
        <begin position="736"/>
        <end position="759"/>
    </location>
</feature>
<feature type="compositionally biased region" description="Basic and acidic residues" evidence="3">
    <location>
        <begin position="820"/>
        <end position="829"/>
    </location>
</feature>
<feature type="compositionally biased region" description="Low complexity" evidence="3">
    <location>
        <begin position="880"/>
        <end position="901"/>
    </location>
</feature>
<feature type="modified residue" description="N-acetylalanine" evidence="1">
    <location>
        <position position="2"/>
    </location>
</feature>
<feature type="modified residue" description="Phosphoserine" evidence="8">
    <location>
        <position position="41"/>
    </location>
</feature>
<feature type="modified residue" description="Phosphoserine" evidence="7 8">
    <location>
        <position position="243"/>
    </location>
</feature>
<feature type="modified residue" description="Phosphoserine" evidence="1">
    <location>
        <position position="271"/>
    </location>
</feature>
<feature type="modified residue" description="Asymmetric dimethylarginine" evidence="9">
    <location>
        <position position="520"/>
    </location>
</feature>
<feature type="modified residue" description="Phosphoserine" evidence="8">
    <location>
        <position position="792"/>
    </location>
</feature>
<feature type="modified residue" description="Phosphoserine" evidence="7 8">
    <location>
        <position position="816"/>
    </location>
</feature>
<feature type="modified residue" description="Phosphoserine" evidence="7 8">
    <location>
        <position position="1002"/>
    </location>
</feature>
<feature type="modified residue" description="Phosphoserine" evidence="1">
    <location>
        <position position="1010"/>
    </location>
</feature>
<feature type="modified residue" description="Phosphoserine" evidence="7">
    <location>
        <position position="1032"/>
    </location>
</feature>
<feature type="modified residue" description="Phosphoserine" evidence="1">
    <location>
        <position position="1051"/>
    </location>
</feature>
<feature type="cross-link" description="Glycyl lysine isopeptide (Lys-Gly) (interchain with G-Cter in SUMO2)" evidence="1">
    <location>
        <position position="1019"/>
    </location>
</feature>
<feature type="splice variant" id="VSP_030148" description="In isoform 2." evidence="4">
    <original>ELSAEAKAALLEFEERERQHKQGRYGSRRGGRRGGS</original>
    <variation>GNSWFWPVGKLIKFPHPFLACFLDLYFHFRSLHIFL</variation>
    <location>
        <begin position="285"/>
        <end position="320"/>
    </location>
</feature>
<feature type="splice variant" id="VSP_030149" description="In isoform 2." evidence="4">
    <location>
        <begin position="321"/>
        <end position="1231"/>
    </location>
</feature>
<feature type="sequence conflict" description="In Ref. 1; BAE31932." evidence="5" ref="1">
    <original>P</original>
    <variation>S</variation>
    <location>
        <position position="794"/>
    </location>
</feature>
<protein>
    <recommendedName>
        <fullName>RNA-binding protein 33</fullName>
    </recommendedName>
    <alternativeName>
        <fullName>Proline-rich protein 8</fullName>
    </alternativeName>
    <alternativeName>
        <fullName>RNA-binding motif protein 33</fullName>
    </alternativeName>
</protein>
<comment type="function">
    <text evidence="1">RNA reader protein, which recognizes and binds specific RNAs, thereby regulating RNA metabolic processes, such as mRNA export, mRNA stability and/or translation. Binds a subset of intronless RNAs containing GC-rich elements, such as NORAD, and promotes their nuclear export by recruiting target RNAs to components of the NXF1-NXT1 RNA export machinery. Specifically recognizes and binds N6-methyladenosine (m6A)-containing mRNAs, promoting their demethylation by ALKBH5. Acts as an molecular adapter, which (1) promotes ALKBH5 recruitment to m6A-containing transcripts and (2) activates ALKBH5 demethylase activity by recruiting SENP1, leading to ALKBH5 deSUMOylation and subsequent activation.</text>
</comment>
<comment type="subunit">
    <text evidence="1">Associates with the NXF1-NXT1 RNA export complex. Interacts with ALKBH5; facilitating ALKBH5 recruitment to m6A-containing transcripts. Interacts with SENP1; promoting ALKBH5 deSUMOylation and subsequent activation.</text>
</comment>
<comment type="subcellular location">
    <subcellularLocation>
        <location evidence="1">Nucleus</location>
    </subcellularLocation>
    <subcellularLocation>
        <location evidence="1">Cytoplasm</location>
    </subcellularLocation>
    <text evidence="1">Localizes predominantly to the nucleus.</text>
</comment>
<comment type="alternative products">
    <event type="alternative splicing"/>
    <isoform>
        <id>Q9CXK9-1</id>
        <name>1</name>
        <sequence type="displayed"/>
    </isoform>
    <isoform>
        <id>Q9CXK9-2</id>
        <name>2</name>
        <sequence type="described" ref="VSP_030148 VSP_030149"/>
    </isoform>
</comment>
<organism>
    <name type="scientific">Mus musculus</name>
    <name type="common">Mouse</name>
    <dbReference type="NCBI Taxonomy" id="10090"/>
    <lineage>
        <taxon>Eukaryota</taxon>
        <taxon>Metazoa</taxon>
        <taxon>Chordata</taxon>
        <taxon>Craniata</taxon>
        <taxon>Vertebrata</taxon>
        <taxon>Euteleostomi</taxon>
        <taxon>Mammalia</taxon>
        <taxon>Eutheria</taxon>
        <taxon>Euarchontoglires</taxon>
        <taxon>Glires</taxon>
        <taxon>Rodentia</taxon>
        <taxon>Myomorpha</taxon>
        <taxon>Muroidea</taxon>
        <taxon>Muridae</taxon>
        <taxon>Murinae</taxon>
        <taxon>Mus</taxon>
        <taxon>Mus</taxon>
    </lineage>
</organism>
<keyword id="KW-0007">Acetylation</keyword>
<keyword id="KW-0025">Alternative splicing</keyword>
<keyword id="KW-0175">Coiled coil</keyword>
<keyword id="KW-0963">Cytoplasm</keyword>
<keyword id="KW-1017">Isopeptide bond</keyword>
<keyword id="KW-0488">Methylation</keyword>
<keyword id="KW-0509">mRNA transport</keyword>
<keyword id="KW-0539">Nucleus</keyword>
<keyword id="KW-0597">Phosphoprotein</keyword>
<keyword id="KW-1185">Reference proteome</keyword>
<keyword id="KW-0694">RNA-binding</keyword>
<keyword id="KW-0813">Transport</keyword>
<keyword id="KW-0832">Ubl conjugation</keyword>